<gene>
    <name evidence="1" type="primary">katG</name>
    <name type="ordered locus">PSPPH_4229</name>
</gene>
<evidence type="ECO:0000255" key="1">
    <source>
        <dbReference type="HAMAP-Rule" id="MF_01961"/>
    </source>
</evidence>
<evidence type="ECO:0000256" key="2">
    <source>
        <dbReference type="SAM" id="MobiDB-lite"/>
    </source>
</evidence>
<keyword id="KW-0349">Heme</keyword>
<keyword id="KW-0376">Hydrogen peroxide</keyword>
<keyword id="KW-0408">Iron</keyword>
<keyword id="KW-0479">Metal-binding</keyword>
<keyword id="KW-0560">Oxidoreductase</keyword>
<keyword id="KW-0575">Peroxidase</keyword>
<protein>
    <recommendedName>
        <fullName evidence="1">Catalase-peroxidase</fullName>
        <shortName evidence="1">CP</shortName>
        <ecNumber evidence="1">1.11.1.21</ecNumber>
    </recommendedName>
    <alternativeName>
        <fullName evidence="1">Peroxidase/catalase</fullName>
    </alternativeName>
</protein>
<feature type="chain" id="PRO_0000354871" description="Catalase-peroxidase">
    <location>
        <begin position="1"/>
        <end position="756"/>
    </location>
</feature>
<feature type="region of interest" description="Disordered" evidence="2">
    <location>
        <begin position="198"/>
        <end position="230"/>
    </location>
</feature>
<feature type="region of interest" description="Disordered" evidence="2">
    <location>
        <begin position="371"/>
        <end position="390"/>
    </location>
</feature>
<feature type="compositionally biased region" description="Basic and acidic residues" evidence="2">
    <location>
        <begin position="214"/>
        <end position="223"/>
    </location>
</feature>
<feature type="active site" description="Proton acceptor" evidence="1">
    <location>
        <position position="92"/>
    </location>
</feature>
<feature type="binding site" description="axial binding residue" evidence="1">
    <location>
        <position position="285"/>
    </location>
    <ligand>
        <name>heme b</name>
        <dbReference type="ChEBI" id="CHEBI:60344"/>
    </ligand>
    <ligandPart>
        <name>Fe</name>
        <dbReference type="ChEBI" id="CHEBI:18248"/>
    </ligandPart>
</feature>
<feature type="site" description="Transition state stabilizer" evidence="1">
    <location>
        <position position="88"/>
    </location>
</feature>
<feature type="cross-link" description="Tryptophyl-tyrosyl-methioninium (Trp-Tyr) (with M-270)" evidence="1">
    <location>
        <begin position="91"/>
        <end position="244"/>
    </location>
</feature>
<feature type="cross-link" description="Tryptophyl-tyrosyl-methioninium (Tyr-Met) (with W-91)" evidence="1">
    <location>
        <begin position="244"/>
        <end position="270"/>
    </location>
</feature>
<name>KATG_PSE14</name>
<reference key="1">
    <citation type="journal article" date="2005" name="J. Bacteriol.">
        <title>Whole-genome sequence analysis of Pseudomonas syringae pv. phaseolicola 1448A reveals divergence among pathovars in genes involved in virulence and transposition.</title>
        <authorList>
            <person name="Joardar V."/>
            <person name="Lindeberg M."/>
            <person name="Jackson R.W."/>
            <person name="Selengut J."/>
            <person name="Dodson R."/>
            <person name="Brinkac L.M."/>
            <person name="Daugherty S.C."/>
            <person name="DeBoy R.T."/>
            <person name="Durkin A.S."/>
            <person name="Gwinn Giglio M."/>
            <person name="Madupu R."/>
            <person name="Nelson W.C."/>
            <person name="Rosovitz M.J."/>
            <person name="Sullivan S.A."/>
            <person name="Crabtree J."/>
            <person name="Creasy T."/>
            <person name="Davidsen T.M."/>
            <person name="Haft D.H."/>
            <person name="Zafar N."/>
            <person name="Zhou L."/>
            <person name="Halpin R."/>
            <person name="Holley T."/>
            <person name="Khouri H.M."/>
            <person name="Feldblyum T.V."/>
            <person name="White O."/>
            <person name="Fraser C.M."/>
            <person name="Chatterjee A.K."/>
            <person name="Cartinhour S."/>
            <person name="Schneider D."/>
            <person name="Mansfield J.W."/>
            <person name="Collmer A."/>
            <person name="Buell R."/>
        </authorList>
    </citation>
    <scope>NUCLEOTIDE SEQUENCE [LARGE SCALE GENOMIC DNA]</scope>
    <source>
        <strain>1448A / Race 6</strain>
    </source>
</reference>
<accession>Q48E42</accession>
<dbReference type="EC" id="1.11.1.21" evidence="1"/>
<dbReference type="EMBL" id="CP000058">
    <property type="protein sequence ID" value="AAZ34722.1"/>
    <property type="molecule type" value="Genomic_DNA"/>
</dbReference>
<dbReference type="RefSeq" id="WP_011169469.1">
    <property type="nucleotide sequence ID" value="NC_005773.3"/>
</dbReference>
<dbReference type="SMR" id="Q48E42"/>
<dbReference type="PeroxiBase" id="2310">
    <property type="entry name" value="PspCP01"/>
</dbReference>
<dbReference type="KEGG" id="psp:PSPPH_4229"/>
<dbReference type="eggNOG" id="COG0376">
    <property type="taxonomic scope" value="Bacteria"/>
</dbReference>
<dbReference type="HOGENOM" id="CLU_025424_2_0_6"/>
<dbReference type="Proteomes" id="UP000000551">
    <property type="component" value="Chromosome"/>
</dbReference>
<dbReference type="GO" id="GO:0005829">
    <property type="term" value="C:cytosol"/>
    <property type="evidence" value="ECO:0007669"/>
    <property type="project" value="TreeGrafter"/>
</dbReference>
<dbReference type="GO" id="GO:0004096">
    <property type="term" value="F:catalase activity"/>
    <property type="evidence" value="ECO:0007669"/>
    <property type="project" value="UniProtKB-UniRule"/>
</dbReference>
<dbReference type="GO" id="GO:0020037">
    <property type="term" value="F:heme binding"/>
    <property type="evidence" value="ECO:0007669"/>
    <property type="project" value="InterPro"/>
</dbReference>
<dbReference type="GO" id="GO:0046872">
    <property type="term" value="F:metal ion binding"/>
    <property type="evidence" value="ECO:0007669"/>
    <property type="project" value="UniProtKB-KW"/>
</dbReference>
<dbReference type="GO" id="GO:0070301">
    <property type="term" value="P:cellular response to hydrogen peroxide"/>
    <property type="evidence" value="ECO:0007669"/>
    <property type="project" value="TreeGrafter"/>
</dbReference>
<dbReference type="GO" id="GO:0042744">
    <property type="term" value="P:hydrogen peroxide catabolic process"/>
    <property type="evidence" value="ECO:0007669"/>
    <property type="project" value="UniProtKB-KW"/>
</dbReference>
<dbReference type="CDD" id="cd00649">
    <property type="entry name" value="catalase_peroxidase_1"/>
    <property type="match status" value="1"/>
</dbReference>
<dbReference type="CDD" id="cd08200">
    <property type="entry name" value="catalase_peroxidase_2"/>
    <property type="match status" value="1"/>
</dbReference>
<dbReference type="FunFam" id="1.10.420.10:FF:000002">
    <property type="entry name" value="Catalase-peroxidase"/>
    <property type="match status" value="1"/>
</dbReference>
<dbReference type="FunFam" id="1.10.420.10:FF:000004">
    <property type="entry name" value="Catalase-peroxidase"/>
    <property type="match status" value="1"/>
</dbReference>
<dbReference type="FunFam" id="1.10.520.10:FF:000002">
    <property type="entry name" value="Catalase-peroxidase"/>
    <property type="match status" value="1"/>
</dbReference>
<dbReference type="FunFam" id="1.10.520.10:FF:000004">
    <property type="entry name" value="Catalase-peroxidase"/>
    <property type="match status" value="1"/>
</dbReference>
<dbReference type="Gene3D" id="1.10.520.10">
    <property type="match status" value="2"/>
</dbReference>
<dbReference type="Gene3D" id="1.10.420.10">
    <property type="entry name" value="Peroxidase, domain 2"/>
    <property type="match status" value="2"/>
</dbReference>
<dbReference type="HAMAP" id="MF_01961">
    <property type="entry name" value="Catal_peroxid"/>
    <property type="match status" value="1"/>
</dbReference>
<dbReference type="InterPro" id="IPR000763">
    <property type="entry name" value="Catalase_peroxidase"/>
</dbReference>
<dbReference type="InterPro" id="IPR002016">
    <property type="entry name" value="Haem_peroxidase"/>
</dbReference>
<dbReference type="InterPro" id="IPR010255">
    <property type="entry name" value="Haem_peroxidase_sf"/>
</dbReference>
<dbReference type="InterPro" id="IPR019794">
    <property type="entry name" value="Peroxidases_AS"/>
</dbReference>
<dbReference type="InterPro" id="IPR019793">
    <property type="entry name" value="Peroxidases_heam-ligand_BS"/>
</dbReference>
<dbReference type="NCBIfam" id="TIGR00198">
    <property type="entry name" value="cat_per_HPI"/>
    <property type="match status" value="1"/>
</dbReference>
<dbReference type="NCBIfam" id="NF011635">
    <property type="entry name" value="PRK15061.1"/>
    <property type="match status" value="1"/>
</dbReference>
<dbReference type="PANTHER" id="PTHR30555:SF0">
    <property type="entry name" value="CATALASE-PEROXIDASE"/>
    <property type="match status" value="1"/>
</dbReference>
<dbReference type="PANTHER" id="PTHR30555">
    <property type="entry name" value="HYDROPEROXIDASE I, BIFUNCTIONAL CATALASE-PEROXIDASE"/>
    <property type="match status" value="1"/>
</dbReference>
<dbReference type="Pfam" id="PF00141">
    <property type="entry name" value="peroxidase"/>
    <property type="match status" value="2"/>
</dbReference>
<dbReference type="PRINTS" id="PR00460">
    <property type="entry name" value="BPEROXIDASE"/>
</dbReference>
<dbReference type="PRINTS" id="PR00458">
    <property type="entry name" value="PEROXIDASE"/>
</dbReference>
<dbReference type="SUPFAM" id="SSF48113">
    <property type="entry name" value="Heme-dependent peroxidases"/>
    <property type="match status" value="2"/>
</dbReference>
<dbReference type="PROSITE" id="PS00435">
    <property type="entry name" value="PEROXIDASE_1"/>
    <property type="match status" value="1"/>
</dbReference>
<dbReference type="PROSITE" id="PS00436">
    <property type="entry name" value="PEROXIDASE_2"/>
    <property type="match status" value="1"/>
</dbReference>
<dbReference type="PROSITE" id="PS50873">
    <property type="entry name" value="PEROXIDASE_4"/>
    <property type="match status" value="1"/>
</dbReference>
<proteinExistence type="inferred from homology"/>
<sequence length="756" mass="82463">MSTESKCPFNHAAGGGTTNRDWWPKQLNLKILHQHSSLSDPMGESFDYAKEFKSLDFEAVKQDLRDVMTRSQDWWPADFGHYGPLFVRMAWHSAGTYRTGDGHGGAGAGQQRFAPLNSWPDNVSLDKARRLIWPVKQKYGRKISWADLIVLTGNVALESMGFKTFGFSGGRPDVWEPEEDVYWGSETTWLGGEERYGAQKKMQQPGDGTLVAEPENHANEESRTASGERNLENPLAAVQMGLIYVNPEGPEGVPDPVASAKDIRETFGRMAMNDEETVALIAGGHAFGKTHGAGPADNVGPEPEAAGLEEQGLGWRNKFGSGKGGDTITSGLEVTWTSTPTKWSNEYLENLFGFEWELTKSPAGAHQWTPKNGAGAGKIPDAHDPSKRHAPSMLTSDLALRFDPAYEQISRRFLNNPEQLADAFARAWFKLTHRDMGPLARYLGPETPAEELLWQDPIPNVDHALVDDQDVAALKGKILASGLSVPQLVSTAWAAASTFRGSDKRGGANGGRLRLAPQKDWAVNQPAQLAGVLKTLEGIQSEFNAAQSSGKQVSIADLIVLAGSAGVEQAAKNAGHHVTVPFTPGRADASQEQTDVESFSFLEPIADGFRNYQKGHYKVSAESLLVDKAQLLTLTAPEMAVLLGGLRVLNINVGQSKHGVFTDKPETLSNDFFKNLLDMGVEWRATSGANDTFEARDRKTGAVKWTGTRVDLVFGSHAQLRAISEVYGSSDANEKFVKDFVAAWTKVMNLDRFDLA</sequence>
<comment type="function">
    <text evidence="1">Bifunctional enzyme with both catalase and broad-spectrum peroxidase activity.</text>
</comment>
<comment type="catalytic activity">
    <reaction evidence="1">
        <text>H2O2 + AH2 = A + 2 H2O</text>
        <dbReference type="Rhea" id="RHEA:30275"/>
        <dbReference type="ChEBI" id="CHEBI:13193"/>
        <dbReference type="ChEBI" id="CHEBI:15377"/>
        <dbReference type="ChEBI" id="CHEBI:16240"/>
        <dbReference type="ChEBI" id="CHEBI:17499"/>
        <dbReference type="EC" id="1.11.1.21"/>
    </reaction>
</comment>
<comment type="catalytic activity">
    <reaction evidence="1">
        <text>2 H2O2 = O2 + 2 H2O</text>
        <dbReference type="Rhea" id="RHEA:20309"/>
        <dbReference type="ChEBI" id="CHEBI:15377"/>
        <dbReference type="ChEBI" id="CHEBI:15379"/>
        <dbReference type="ChEBI" id="CHEBI:16240"/>
        <dbReference type="EC" id="1.11.1.21"/>
    </reaction>
</comment>
<comment type="cofactor">
    <cofactor evidence="1">
        <name>heme b</name>
        <dbReference type="ChEBI" id="CHEBI:60344"/>
    </cofactor>
    <text evidence="1">Binds 1 heme b (iron(II)-protoporphyrin IX) group per dimer.</text>
</comment>
<comment type="subunit">
    <text evidence="1">Homodimer or homotetramer.</text>
</comment>
<comment type="PTM">
    <text evidence="1">Formation of the three residue Trp-Tyr-Met cross-link is important for the catalase, but not the peroxidase activity of the enzyme.</text>
</comment>
<comment type="similarity">
    <text evidence="1">Belongs to the peroxidase family. Peroxidase/catalase subfamily.</text>
</comment>
<organism>
    <name type="scientific">Pseudomonas savastanoi pv. phaseolicola (strain 1448A / Race 6)</name>
    <name type="common">Pseudomonas syringae pv. phaseolicola (strain 1448A / Race 6)</name>
    <dbReference type="NCBI Taxonomy" id="264730"/>
    <lineage>
        <taxon>Bacteria</taxon>
        <taxon>Pseudomonadati</taxon>
        <taxon>Pseudomonadota</taxon>
        <taxon>Gammaproteobacteria</taxon>
        <taxon>Pseudomonadales</taxon>
        <taxon>Pseudomonadaceae</taxon>
        <taxon>Pseudomonas</taxon>
    </lineage>
</organism>